<evidence type="ECO:0000255" key="1">
    <source>
        <dbReference type="HAMAP-Rule" id="MF_00008"/>
    </source>
</evidence>
<organism>
    <name type="scientific">Streptococcus pyogenes serotype M18 (strain MGAS8232)</name>
    <dbReference type="NCBI Taxonomy" id="186103"/>
    <lineage>
        <taxon>Bacteria</taxon>
        <taxon>Bacillati</taxon>
        <taxon>Bacillota</taxon>
        <taxon>Bacilli</taxon>
        <taxon>Lactobacillales</taxon>
        <taxon>Streptococcaceae</taxon>
        <taxon>Streptococcus</taxon>
    </lineage>
</organism>
<sequence>MTKADQIFKANIQKIINEGSLSEQARPKYKDGRTAHSKYITGAFAEYDLAKGEFPITTLRPIPIKSAIKELFWIYQDQSNSLDVLEAKYNVHYWNEWEVDQTRTIGQRYGAVVKKHDIISKILKQLAENPWNRRNVISLWDYEAFEETKGLLPCAFQIMFDVRRVGEDLYLDASLTQRSNDILVAHHINAMQYVALQMMIAKHFGWKIGKFFYFVNNLHIYDNQFDQAQELLKRQPVASQPKLVLNVPDGTNFFDIKPDDFELQNYDPVKPQLHFDLAI</sequence>
<keyword id="KW-0963">Cytoplasm</keyword>
<keyword id="KW-0489">Methyltransferase</keyword>
<keyword id="KW-0545">Nucleotide biosynthesis</keyword>
<keyword id="KW-0808">Transferase</keyword>
<dbReference type="EC" id="2.1.1.45" evidence="1"/>
<dbReference type="EMBL" id="AE009949">
    <property type="protein sequence ID" value="AAL97585.1"/>
    <property type="molecule type" value="Genomic_DNA"/>
</dbReference>
<dbReference type="RefSeq" id="WP_011017679.1">
    <property type="nucleotide sequence ID" value="NC_003485.1"/>
</dbReference>
<dbReference type="SMR" id="Q8P1D1"/>
<dbReference type="KEGG" id="spm:spyM18_0943"/>
<dbReference type="HOGENOM" id="CLU_021669_0_0_9"/>
<dbReference type="UniPathway" id="UPA00575"/>
<dbReference type="GO" id="GO:0005829">
    <property type="term" value="C:cytosol"/>
    <property type="evidence" value="ECO:0007669"/>
    <property type="project" value="TreeGrafter"/>
</dbReference>
<dbReference type="GO" id="GO:0004799">
    <property type="term" value="F:thymidylate synthase activity"/>
    <property type="evidence" value="ECO:0007669"/>
    <property type="project" value="UniProtKB-UniRule"/>
</dbReference>
<dbReference type="GO" id="GO:0006231">
    <property type="term" value="P:dTMP biosynthetic process"/>
    <property type="evidence" value="ECO:0007669"/>
    <property type="project" value="UniProtKB-UniRule"/>
</dbReference>
<dbReference type="GO" id="GO:0006235">
    <property type="term" value="P:dTTP biosynthetic process"/>
    <property type="evidence" value="ECO:0007669"/>
    <property type="project" value="UniProtKB-UniRule"/>
</dbReference>
<dbReference type="GO" id="GO:0032259">
    <property type="term" value="P:methylation"/>
    <property type="evidence" value="ECO:0007669"/>
    <property type="project" value="UniProtKB-KW"/>
</dbReference>
<dbReference type="CDD" id="cd00351">
    <property type="entry name" value="TS_Pyrimidine_HMase"/>
    <property type="match status" value="1"/>
</dbReference>
<dbReference type="Gene3D" id="3.30.572.10">
    <property type="entry name" value="Thymidylate synthase/dCMP hydroxymethylase domain"/>
    <property type="match status" value="1"/>
</dbReference>
<dbReference type="HAMAP" id="MF_00008">
    <property type="entry name" value="Thymidy_synth_bact"/>
    <property type="match status" value="1"/>
</dbReference>
<dbReference type="InterPro" id="IPR045097">
    <property type="entry name" value="Thymidate_synth/dCMP_Mease"/>
</dbReference>
<dbReference type="InterPro" id="IPR023451">
    <property type="entry name" value="Thymidate_synth/dCMP_Mease_dom"/>
</dbReference>
<dbReference type="InterPro" id="IPR036926">
    <property type="entry name" value="Thymidate_synth/dCMP_Mease_sf"/>
</dbReference>
<dbReference type="InterPro" id="IPR000398">
    <property type="entry name" value="Thymidylate_synthase"/>
</dbReference>
<dbReference type="InterPro" id="IPR020940">
    <property type="entry name" value="Thymidylate_synthase_AS"/>
</dbReference>
<dbReference type="NCBIfam" id="NF002495">
    <property type="entry name" value="PRK01827.1-1"/>
    <property type="match status" value="1"/>
</dbReference>
<dbReference type="PANTHER" id="PTHR11548">
    <property type="entry name" value="THYMIDYLATE SYNTHASE 1"/>
    <property type="match status" value="1"/>
</dbReference>
<dbReference type="PANTHER" id="PTHR11548:SF1">
    <property type="entry name" value="THYMIDYLATE SYNTHASE 1"/>
    <property type="match status" value="1"/>
</dbReference>
<dbReference type="Pfam" id="PF00303">
    <property type="entry name" value="Thymidylat_synt"/>
    <property type="match status" value="1"/>
</dbReference>
<dbReference type="PRINTS" id="PR00108">
    <property type="entry name" value="THYMDSNTHASE"/>
</dbReference>
<dbReference type="SUPFAM" id="SSF55831">
    <property type="entry name" value="Thymidylate synthase/dCMP hydroxymethylase"/>
    <property type="match status" value="1"/>
</dbReference>
<dbReference type="PROSITE" id="PS00091">
    <property type="entry name" value="THYMIDYLATE_SYNTHASE"/>
    <property type="match status" value="1"/>
</dbReference>
<accession>Q8P1D1</accession>
<protein>
    <recommendedName>
        <fullName evidence="1">Thymidylate synthase</fullName>
        <shortName evidence="1">TS</shortName>
        <shortName evidence="1">TSase</shortName>
        <ecNumber evidence="1">2.1.1.45</ecNumber>
    </recommendedName>
</protein>
<gene>
    <name evidence="1" type="primary">thyA</name>
    <name type="ordered locus">spyM18_0943</name>
</gene>
<comment type="function">
    <text evidence="1">Catalyzes the reductive methylation of 2'-deoxyuridine-5'-monophosphate (dUMP) to 2'-deoxythymidine-5'-monophosphate (dTMP) while utilizing 5,10-methylenetetrahydrofolate (mTHF) as the methyl donor and reductant in the reaction, yielding dihydrofolate (DHF) as a by-product. This enzymatic reaction provides an intracellular de novo source of dTMP, an essential precursor for DNA biosynthesis.</text>
</comment>
<comment type="catalytic activity">
    <reaction evidence="1">
        <text>dUMP + (6R)-5,10-methylene-5,6,7,8-tetrahydrofolate = 7,8-dihydrofolate + dTMP</text>
        <dbReference type="Rhea" id="RHEA:12104"/>
        <dbReference type="ChEBI" id="CHEBI:15636"/>
        <dbReference type="ChEBI" id="CHEBI:57451"/>
        <dbReference type="ChEBI" id="CHEBI:63528"/>
        <dbReference type="ChEBI" id="CHEBI:246422"/>
        <dbReference type="EC" id="2.1.1.45"/>
    </reaction>
</comment>
<comment type="pathway">
    <text evidence="1">Pyrimidine metabolism; dTTP biosynthesis.</text>
</comment>
<comment type="subunit">
    <text evidence="1">Homodimer.</text>
</comment>
<comment type="subcellular location">
    <subcellularLocation>
        <location evidence="1">Cytoplasm</location>
    </subcellularLocation>
</comment>
<comment type="similarity">
    <text evidence="1">Belongs to the thymidylate synthase family. Bacterial-type ThyA subfamily.</text>
</comment>
<feature type="chain" id="PRO_0000141035" description="Thymidylate synthase">
    <location>
        <begin position="1"/>
        <end position="279"/>
    </location>
</feature>
<feature type="active site" description="Nucleophile" evidence="1">
    <location>
        <position position="154"/>
    </location>
</feature>
<feature type="binding site" evidence="1">
    <location>
        <begin position="133"/>
        <end position="134"/>
    </location>
    <ligand>
        <name>dUMP</name>
        <dbReference type="ChEBI" id="CHEBI:246422"/>
        <note>ligand shared between dimeric partners</note>
    </ligand>
</feature>
<feature type="binding site" description="in other chain" evidence="1">
    <location>
        <begin position="178"/>
        <end position="181"/>
    </location>
    <ligand>
        <name>dUMP</name>
        <dbReference type="ChEBI" id="CHEBI:246422"/>
        <note>ligand shared between dimeric partners</note>
    </ligand>
</feature>
<feature type="binding site" evidence="1">
    <location>
        <position position="181"/>
    </location>
    <ligand>
        <name>(6R)-5,10-methylene-5,6,7,8-tetrahydrofolate</name>
        <dbReference type="ChEBI" id="CHEBI:15636"/>
    </ligand>
</feature>
<feature type="binding site" description="in other chain" evidence="1">
    <location>
        <position position="189"/>
    </location>
    <ligand>
        <name>dUMP</name>
        <dbReference type="ChEBI" id="CHEBI:246422"/>
        <note>ligand shared between dimeric partners</note>
    </ligand>
</feature>
<feature type="binding site" description="in other chain" evidence="1">
    <location>
        <begin position="219"/>
        <end position="221"/>
    </location>
    <ligand>
        <name>dUMP</name>
        <dbReference type="ChEBI" id="CHEBI:246422"/>
        <note>ligand shared between dimeric partners</note>
    </ligand>
</feature>
<feature type="binding site" evidence="1">
    <location>
        <position position="278"/>
    </location>
    <ligand>
        <name>(6R)-5,10-methylene-5,6,7,8-tetrahydrofolate</name>
        <dbReference type="ChEBI" id="CHEBI:15636"/>
    </ligand>
</feature>
<name>TYSY_STRP8</name>
<reference key="1">
    <citation type="journal article" date="2002" name="Proc. Natl. Acad. Sci. U.S.A.">
        <title>Genome sequence and comparative microarray analysis of serotype M18 group A Streptococcus strains associated with acute rheumatic fever outbreaks.</title>
        <authorList>
            <person name="Smoot J.C."/>
            <person name="Barbian K.D."/>
            <person name="Van Gompel J.J."/>
            <person name="Smoot L.M."/>
            <person name="Chaussee M.S."/>
            <person name="Sylva G.L."/>
            <person name="Sturdevant D.E."/>
            <person name="Ricklefs S.M."/>
            <person name="Porcella S.F."/>
            <person name="Parkins L.D."/>
            <person name="Beres S.B."/>
            <person name="Campbell D.S."/>
            <person name="Smith T.M."/>
            <person name="Zhang Q."/>
            <person name="Kapur V."/>
            <person name="Daly J.A."/>
            <person name="Veasy L.G."/>
            <person name="Musser J.M."/>
        </authorList>
    </citation>
    <scope>NUCLEOTIDE SEQUENCE [LARGE SCALE GENOMIC DNA]</scope>
    <source>
        <strain>MGAS8232</strain>
    </source>
</reference>
<proteinExistence type="inferred from homology"/>